<feature type="chain" id="PRO_0000350068" description="Dual-specificity RNA methyltransferase RlmN">
    <location>
        <begin position="1"/>
        <end position="411"/>
    </location>
</feature>
<feature type="domain" description="Radical SAM core" evidence="2">
    <location>
        <begin position="131"/>
        <end position="380"/>
    </location>
</feature>
<feature type="active site" description="Proton acceptor" evidence="1">
    <location>
        <position position="125"/>
    </location>
</feature>
<feature type="active site" description="S-methylcysteine intermediate" evidence="1">
    <location>
        <position position="383"/>
    </location>
</feature>
<feature type="binding site" evidence="1">
    <location>
        <position position="145"/>
    </location>
    <ligand>
        <name>[4Fe-4S] cluster</name>
        <dbReference type="ChEBI" id="CHEBI:49883"/>
        <note>4Fe-4S-S-AdoMet</note>
    </ligand>
</feature>
<feature type="binding site" evidence="1">
    <location>
        <position position="149"/>
    </location>
    <ligand>
        <name>[4Fe-4S] cluster</name>
        <dbReference type="ChEBI" id="CHEBI:49883"/>
        <note>4Fe-4S-S-AdoMet</note>
    </ligand>
</feature>
<feature type="binding site" evidence="1">
    <location>
        <position position="152"/>
    </location>
    <ligand>
        <name>[4Fe-4S] cluster</name>
        <dbReference type="ChEBI" id="CHEBI:49883"/>
        <note>4Fe-4S-S-AdoMet</note>
    </ligand>
</feature>
<feature type="binding site" evidence="1">
    <location>
        <begin position="209"/>
        <end position="210"/>
    </location>
    <ligand>
        <name>S-adenosyl-L-methionine</name>
        <dbReference type="ChEBI" id="CHEBI:59789"/>
    </ligand>
</feature>
<feature type="binding site" evidence="1">
    <location>
        <position position="241"/>
    </location>
    <ligand>
        <name>S-adenosyl-L-methionine</name>
        <dbReference type="ChEBI" id="CHEBI:59789"/>
    </ligand>
</feature>
<feature type="binding site" evidence="1">
    <location>
        <begin position="263"/>
        <end position="265"/>
    </location>
    <ligand>
        <name>S-adenosyl-L-methionine</name>
        <dbReference type="ChEBI" id="CHEBI:59789"/>
    </ligand>
</feature>
<feature type="binding site" evidence="1">
    <location>
        <position position="340"/>
    </location>
    <ligand>
        <name>S-adenosyl-L-methionine</name>
        <dbReference type="ChEBI" id="CHEBI:59789"/>
    </ligand>
</feature>
<feature type="disulfide bond" description="(transient)" evidence="1">
    <location>
        <begin position="138"/>
        <end position="383"/>
    </location>
</feature>
<keyword id="KW-0004">4Fe-4S</keyword>
<keyword id="KW-0963">Cytoplasm</keyword>
<keyword id="KW-1015">Disulfide bond</keyword>
<keyword id="KW-0408">Iron</keyword>
<keyword id="KW-0411">Iron-sulfur</keyword>
<keyword id="KW-0479">Metal-binding</keyword>
<keyword id="KW-0489">Methyltransferase</keyword>
<keyword id="KW-0698">rRNA processing</keyword>
<keyword id="KW-0949">S-adenosyl-L-methionine</keyword>
<keyword id="KW-0808">Transferase</keyword>
<keyword id="KW-0819">tRNA processing</keyword>
<dbReference type="EC" id="2.1.1.192" evidence="1"/>
<dbReference type="EMBL" id="CP000911">
    <property type="protein sequence ID" value="ABY37185.1"/>
    <property type="molecule type" value="Genomic_DNA"/>
</dbReference>
<dbReference type="RefSeq" id="WP_002968086.1">
    <property type="nucleotide sequence ID" value="NC_010169.1"/>
</dbReference>
<dbReference type="SMR" id="B0CII9"/>
<dbReference type="GeneID" id="97534497"/>
<dbReference type="KEGG" id="bmt:BSUIS_A0080"/>
<dbReference type="HOGENOM" id="CLU_029101_2_0_5"/>
<dbReference type="Proteomes" id="UP000008545">
    <property type="component" value="Chromosome I"/>
</dbReference>
<dbReference type="GO" id="GO:0005737">
    <property type="term" value="C:cytoplasm"/>
    <property type="evidence" value="ECO:0007669"/>
    <property type="project" value="UniProtKB-SubCell"/>
</dbReference>
<dbReference type="GO" id="GO:0051539">
    <property type="term" value="F:4 iron, 4 sulfur cluster binding"/>
    <property type="evidence" value="ECO:0007669"/>
    <property type="project" value="UniProtKB-UniRule"/>
</dbReference>
<dbReference type="GO" id="GO:0046872">
    <property type="term" value="F:metal ion binding"/>
    <property type="evidence" value="ECO:0007669"/>
    <property type="project" value="UniProtKB-KW"/>
</dbReference>
<dbReference type="GO" id="GO:0070040">
    <property type="term" value="F:rRNA (adenine(2503)-C2-)-methyltransferase activity"/>
    <property type="evidence" value="ECO:0007669"/>
    <property type="project" value="UniProtKB-UniRule"/>
</dbReference>
<dbReference type="GO" id="GO:0019843">
    <property type="term" value="F:rRNA binding"/>
    <property type="evidence" value="ECO:0007669"/>
    <property type="project" value="UniProtKB-UniRule"/>
</dbReference>
<dbReference type="GO" id="GO:0002935">
    <property type="term" value="F:tRNA (adenine(37)-C2)-methyltransferase activity"/>
    <property type="evidence" value="ECO:0007669"/>
    <property type="project" value="UniProtKB-UniRule"/>
</dbReference>
<dbReference type="GO" id="GO:0000049">
    <property type="term" value="F:tRNA binding"/>
    <property type="evidence" value="ECO:0007669"/>
    <property type="project" value="UniProtKB-UniRule"/>
</dbReference>
<dbReference type="GO" id="GO:0070475">
    <property type="term" value="P:rRNA base methylation"/>
    <property type="evidence" value="ECO:0007669"/>
    <property type="project" value="UniProtKB-UniRule"/>
</dbReference>
<dbReference type="GO" id="GO:0030488">
    <property type="term" value="P:tRNA methylation"/>
    <property type="evidence" value="ECO:0007669"/>
    <property type="project" value="UniProtKB-UniRule"/>
</dbReference>
<dbReference type="CDD" id="cd01335">
    <property type="entry name" value="Radical_SAM"/>
    <property type="match status" value="1"/>
</dbReference>
<dbReference type="FunFam" id="3.20.20.70:FF:000008">
    <property type="entry name" value="Dual-specificity RNA methyltransferase RlmN"/>
    <property type="match status" value="1"/>
</dbReference>
<dbReference type="Gene3D" id="1.10.150.530">
    <property type="match status" value="1"/>
</dbReference>
<dbReference type="Gene3D" id="3.20.20.70">
    <property type="entry name" value="Aldolase class I"/>
    <property type="match status" value="1"/>
</dbReference>
<dbReference type="HAMAP" id="MF_01849">
    <property type="entry name" value="RNA_methyltr_RlmN"/>
    <property type="match status" value="1"/>
</dbReference>
<dbReference type="InterPro" id="IPR013785">
    <property type="entry name" value="Aldolase_TIM"/>
</dbReference>
<dbReference type="InterPro" id="IPR040072">
    <property type="entry name" value="Methyltransferase_A"/>
</dbReference>
<dbReference type="InterPro" id="IPR048641">
    <property type="entry name" value="RlmN_N"/>
</dbReference>
<dbReference type="InterPro" id="IPR027492">
    <property type="entry name" value="RNA_MTrfase_RlmN"/>
</dbReference>
<dbReference type="InterPro" id="IPR004383">
    <property type="entry name" value="rRNA_lsu_MTrfase_RlmN/Cfr"/>
</dbReference>
<dbReference type="InterPro" id="IPR007197">
    <property type="entry name" value="rSAM"/>
</dbReference>
<dbReference type="NCBIfam" id="TIGR00048">
    <property type="entry name" value="rRNA_mod_RlmN"/>
    <property type="match status" value="1"/>
</dbReference>
<dbReference type="PANTHER" id="PTHR30544">
    <property type="entry name" value="23S RRNA METHYLTRANSFERASE"/>
    <property type="match status" value="1"/>
</dbReference>
<dbReference type="PANTHER" id="PTHR30544:SF5">
    <property type="entry name" value="RADICAL SAM CORE DOMAIN-CONTAINING PROTEIN"/>
    <property type="match status" value="1"/>
</dbReference>
<dbReference type="Pfam" id="PF04055">
    <property type="entry name" value="Radical_SAM"/>
    <property type="match status" value="1"/>
</dbReference>
<dbReference type="Pfam" id="PF21016">
    <property type="entry name" value="RlmN_N"/>
    <property type="match status" value="1"/>
</dbReference>
<dbReference type="PIRSF" id="PIRSF006004">
    <property type="entry name" value="CHP00048"/>
    <property type="match status" value="1"/>
</dbReference>
<dbReference type="SFLD" id="SFLDF00275">
    <property type="entry name" value="adenosine_C2_methyltransferase"/>
    <property type="match status" value="1"/>
</dbReference>
<dbReference type="SFLD" id="SFLDG01062">
    <property type="entry name" value="methyltransferase_(Class_A)"/>
    <property type="match status" value="1"/>
</dbReference>
<dbReference type="SUPFAM" id="SSF102114">
    <property type="entry name" value="Radical SAM enzymes"/>
    <property type="match status" value="1"/>
</dbReference>
<dbReference type="PROSITE" id="PS51918">
    <property type="entry name" value="RADICAL_SAM"/>
    <property type="match status" value="1"/>
</dbReference>
<protein>
    <recommendedName>
        <fullName evidence="1">Dual-specificity RNA methyltransferase RlmN</fullName>
        <ecNumber evidence="1">2.1.1.192</ecNumber>
    </recommendedName>
    <alternativeName>
        <fullName evidence="1">23S rRNA (adenine(2503)-C(2))-methyltransferase</fullName>
    </alternativeName>
    <alternativeName>
        <fullName evidence="1">23S rRNA m2A2503 methyltransferase</fullName>
    </alternativeName>
    <alternativeName>
        <fullName evidence="1">Ribosomal RNA large subunit methyltransferase N</fullName>
    </alternativeName>
    <alternativeName>
        <fullName evidence="1">tRNA (adenine(37)-C(2))-methyltransferase</fullName>
    </alternativeName>
    <alternativeName>
        <fullName evidence="1">tRNA m2A37 methyltransferase</fullName>
    </alternativeName>
</protein>
<evidence type="ECO:0000255" key="1">
    <source>
        <dbReference type="HAMAP-Rule" id="MF_01849"/>
    </source>
</evidence>
<evidence type="ECO:0000255" key="2">
    <source>
        <dbReference type="PROSITE-ProRule" id="PRU01266"/>
    </source>
</evidence>
<proteinExistence type="inferred from homology"/>
<gene>
    <name evidence="1" type="primary">rlmN</name>
    <name type="ordered locus">BSUIS_A0080</name>
</gene>
<sequence>MSISFDLTIDDTRDQLARHARASLEAKPSLIGMSREEMAAALIAAGVPERQVKMRISQLWHWLYVRGVSDFADMRNISKDLRAMLAQHFTIARPEVVEEQISQDGTRKWLFRFPPRGAGRPVEIESVYIPEEGRGTLCISSQVGCTLTCSFCHTGTQKLVRNLTSEEILAQLLTARDRLGDFPDKDTPDGAMVPAEGRKITNIVMMGMGEPLYNFEEVKKALLIASDGDGLSLSKRRITLSTSGVVPEIYRTGDEIGVMLAISLHAVRDELRDILVPINKKYPLAELIKACREYPGLSNAKRITFEYVMLKDINDSLDDAKLLVKLLQGIPAKINLIPFNPWPGTNYQCSDWEQIEKFADYVNAAGYASPIRTPRGRDILAACGQLKSESERLRKSERLALEAMMIAGHGE</sequence>
<accession>B0CII9</accession>
<organism>
    <name type="scientific">Brucella suis (strain ATCC 23445 / NCTC 10510)</name>
    <dbReference type="NCBI Taxonomy" id="470137"/>
    <lineage>
        <taxon>Bacteria</taxon>
        <taxon>Pseudomonadati</taxon>
        <taxon>Pseudomonadota</taxon>
        <taxon>Alphaproteobacteria</taxon>
        <taxon>Hyphomicrobiales</taxon>
        <taxon>Brucellaceae</taxon>
        <taxon>Brucella/Ochrobactrum group</taxon>
        <taxon>Brucella</taxon>
    </lineage>
</organism>
<name>RLMN_BRUSI</name>
<comment type="function">
    <text evidence="1">Specifically methylates position 2 of adenine 2503 in 23S rRNA and position 2 of adenine 37 in tRNAs. m2A2503 modification seems to play a crucial role in the proofreading step occurring at the peptidyl transferase center and thus would serve to optimize ribosomal fidelity.</text>
</comment>
<comment type="catalytic activity">
    <reaction evidence="1">
        <text>adenosine(2503) in 23S rRNA + 2 reduced [2Fe-2S]-[ferredoxin] + 2 S-adenosyl-L-methionine = 2-methyladenosine(2503) in 23S rRNA + 5'-deoxyadenosine + L-methionine + 2 oxidized [2Fe-2S]-[ferredoxin] + S-adenosyl-L-homocysteine</text>
        <dbReference type="Rhea" id="RHEA:42916"/>
        <dbReference type="Rhea" id="RHEA-COMP:10000"/>
        <dbReference type="Rhea" id="RHEA-COMP:10001"/>
        <dbReference type="Rhea" id="RHEA-COMP:10152"/>
        <dbReference type="Rhea" id="RHEA-COMP:10282"/>
        <dbReference type="ChEBI" id="CHEBI:17319"/>
        <dbReference type="ChEBI" id="CHEBI:33737"/>
        <dbReference type="ChEBI" id="CHEBI:33738"/>
        <dbReference type="ChEBI" id="CHEBI:57844"/>
        <dbReference type="ChEBI" id="CHEBI:57856"/>
        <dbReference type="ChEBI" id="CHEBI:59789"/>
        <dbReference type="ChEBI" id="CHEBI:74411"/>
        <dbReference type="ChEBI" id="CHEBI:74497"/>
        <dbReference type="EC" id="2.1.1.192"/>
    </reaction>
</comment>
<comment type="catalytic activity">
    <reaction evidence="1">
        <text>adenosine(37) in tRNA + 2 reduced [2Fe-2S]-[ferredoxin] + 2 S-adenosyl-L-methionine = 2-methyladenosine(37) in tRNA + 5'-deoxyadenosine + L-methionine + 2 oxidized [2Fe-2S]-[ferredoxin] + S-adenosyl-L-homocysteine</text>
        <dbReference type="Rhea" id="RHEA:43332"/>
        <dbReference type="Rhea" id="RHEA-COMP:10000"/>
        <dbReference type="Rhea" id="RHEA-COMP:10001"/>
        <dbReference type="Rhea" id="RHEA-COMP:10162"/>
        <dbReference type="Rhea" id="RHEA-COMP:10485"/>
        <dbReference type="ChEBI" id="CHEBI:17319"/>
        <dbReference type="ChEBI" id="CHEBI:33737"/>
        <dbReference type="ChEBI" id="CHEBI:33738"/>
        <dbReference type="ChEBI" id="CHEBI:57844"/>
        <dbReference type="ChEBI" id="CHEBI:57856"/>
        <dbReference type="ChEBI" id="CHEBI:59789"/>
        <dbReference type="ChEBI" id="CHEBI:74411"/>
        <dbReference type="ChEBI" id="CHEBI:74497"/>
        <dbReference type="EC" id="2.1.1.192"/>
    </reaction>
</comment>
<comment type="cofactor">
    <cofactor evidence="1">
        <name>[4Fe-4S] cluster</name>
        <dbReference type="ChEBI" id="CHEBI:49883"/>
    </cofactor>
    <text evidence="1">Binds 1 [4Fe-4S] cluster. The cluster is coordinated with 3 cysteines and an exchangeable S-adenosyl-L-methionine.</text>
</comment>
<comment type="subcellular location">
    <subcellularLocation>
        <location evidence="1">Cytoplasm</location>
    </subcellularLocation>
</comment>
<comment type="miscellaneous">
    <text evidence="1">Reaction proceeds by a ping-pong mechanism involving intermediate methylation of a conserved cysteine residue.</text>
</comment>
<comment type="similarity">
    <text evidence="1">Belongs to the radical SAM superfamily. RlmN family.</text>
</comment>
<reference key="1">
    <citation type="submission" date="2007-12" db="EMBL/GenBank/DDBJ databases">
        <title>Brucella suis ATCC 23445 whole genome shotgun sequencing project.</title>
        <authorList>
            <person name="Setubal J.C."/>
            <person name="Bowns C."/>
            <person name="Boyle S."/>
            <person name="Crasta O.R."/>
            <person name="Czar M.J."/>
            <person name="Dharmanolla C."/>
            <person name="Gillespie J.J."/>
            <person name="Kenyon R.W."/>
            <person name="Lu J."/>
            <person name="Mane S."/>
            <person name="Mohapatra S."/>
            <person name="Nagrani S."/>
            <person name="Purkayastha A."/>
            <person name="Rajasimha H.K."/>
            <person name="Shallom J.M."/>
            <person name="Shallom S."/>
            <person name="Shukla M."/>
            <person name="Snyder E.E."/>
            <person name="Sobral B.W."/>
            <person name="Wattam A.R."/>
            <person name="Will R."/>
            <person name="Williams K."/>
            <person name="Yoo H."/>
            <person name="Bruce D."/>
            <person name="Detter C."/>
            <person name="Munk C."/>
            <person name="Brettin T.S."/>
        </authorList>
    </citation>
    <scope>NUCLEOTIDE SEQUENCE [LARGE SCALE GENOMIC DNA]</scope>
    <source>
        <strain>ATCC 23445 / NCTC 10510</strain>
    </source>
</reference>